<gene>
    <name type="primary">TXNDC9</name>
    <name type="synonym">APACD</name>
</gene>
<proteinExistence type="evidence at transcript level"/>
<evidence type="ECO:0000250" key="1"/>
<evidence type="ECO:0000250" key="2">
    <source>
        <dbReference type="UniProtKB" id="O14530"/>
    </source>
</evidence>
<evidence type="ECO:0000250" key="3">
    <source>
        <dbReference type="UniProtKB" id="Q9CQ79"/>
    </source>
</evidence>
<evidence type="ECO:0000255" key="4">
    <source>
        <dbReference type="PROSITE-ProRule" id="PRU00691"/>
    </source>
</evidence>
<evidence type="ECO:0000305" key="5"/>
<dbReference type="EMBL" id="BC118430">
    <property type="protein sequence ID" value="AAI18431.1"/>
    <property type="molecule type" value="mRNA"/>
</dbReference>
<dbReference type="EMBL" id="AF027733">
    <property type="protein sequence ID" value="AAB84006.1"/>
    <property type="status" value="ALT_FRAME"/>
    <property type="molecule type" value="Genomic_DNA"/>
</dbReference>
<dbReference type="RefSeq" id="NP_001069617.1">
    <property type="nucleotide sequence ID" value="NM_001076149.1"/>
</dbReference>
<dbReference type="SMR" id="O18883"/>
<dbReference type="FunCoup" id="O18883">
    <property type="interactions" value="2889"/>
</dbReference>
<dbReference type="STRING" id="9913.ENSBTAP00000009353"/>
<dbReference type="PaxDb" id="9913-ENSBTAP00000009353"/>
<dbReference type="GeneID" id="539143"/>
<dbReference type="KEGG" id="bta:539143"/>
<dbReference type="CTD" id="10190"/>
<dbReference type="eggNOG" id="KOG1672">
    <property type="taxonomic scope" value="Eukaryota"/>
</dbReference>
<dbReference type="InParanoid" id="O18883"/>
<dbReference type="OrthoDB" id="10257948at2759"/>
<dbReference type="Proteomes" id="UP000009136">
    <property type="component" value="Unplaced"/>
</dbReference>
<dbReference type="GO" id="GO:0005813">
    <property type="term" value="C:centrosome"/>
    <property type="evidence" value="ECO:0007669"/>
    <property type="project" value="UniProtKB-SubCell"/>
</dbReference>
<dbReference type="GO" id="GO:0005737">
    <property type="term" value="C:cytoplasm"/>
    <property type="evidence" value="ECO:0000318"/>
    <property type="project" value="GO_Central"/>
</dbReference>
<dbReference type="GO" id="GO:0030496">
    <property type="term" value="C:midbody"/>
    <property type="evidence" value="ECO:0007669"/>
    <property type="project" value="UniProtKB-SubCell"/>
</dbReference>
<dbReference type="GO" id="GO:0005634">
    <property type="term" value="C:nucleus"/>
    <property type="evidence" value="ECO:0007669"/>
    <property type="project" value="UniProtKB-SubCell"/>
</dbReference>
<dbReference type="GO" id="GO:0000226">
    <property type="term" value="P:microtubule cytoskeleton organization"/>
    <property type="evidence" value="ECO:0000318"/>
    <property type="project" value="GO_Central"/>
</dbReference>
<dbReference type="CDD" id="cd02989">
    <property type="entry name" value="Phd_like_TxnDC9"/>
    <property type="match status" value="1"/>
</dbReference>
<dbReference type="FunFam" id="3.40.30.10:FF:000141">
    <property type="entry name" value="Thioredoxin domain-containing protein 9"/>
    <property type="match status" value="1"/>
</dbReference>
<dbReference type="Gene3D" id="3.40.30.10">
    <property type="entry name" value="Glutaredoxin"/>
    <property type="match status" value="1"/>
</dbReference>
<dbReference type="InterPro" id="IPR036249">
    <property type="entry name" value="Thioredoxin-like_sf"/>
</dbReference>
<dbReference type="InterPro" id="IPR013766">
    <property type="entry name" value="Thioredoxin_domain"/>
</dbReference>
<dbReference type="PANTHER" id="PTHR21148">
    <property type="entry name" value="THIOREDOXIN DOMAIN-CONTAINING PROTEIN 9"/>
    <property type="match status" value="1"/>
</dbReference>
<dbReference type="Pfam" id="PF00085">
    <property type="entry name" value="Thioredoxin"/>
    <property type="match status" value="1"/>
</dbReference>
<dbReference type="SUPFAM" id="SSF52833">
    <property type="entry name" value="Thioredoxin-like"/>
    <property type="match status" value="1"/>
</dbReference>
<dbReference type="PROSITE" id="PS51352">
    <property type="entry name" value="THIOREDOXIN_2"/>
    <property type="match status" value="1"/>
</dbReference>
<protein>
    <recommendedName>
        <fullName>Thioredoxin domain-containing protein 9</fullName>
    </recommendedName>
    <alternativeName>
        <fullName>Protein 1-4</fullName>
    </alternativeName>
</protein>
<accession>O18883</accession>
<accession>Q17QD0</accession>
<name>TXND9_BOVIN</name>
<keyword id="KW-0963">Cytoplasm</keyword>
<keyword id="KW-0206">Cytoskeleton</keyword>
<keyword id="KW-0539">Nucleus</keyword>
<keyword id="KW-0597">Phosphoprotein</keyword>
<keyword id="KW-1185">Reference proteome</keyword>
<reference key="1">
    <citation type="submission" date="2006-06" db="EMBL/GenBank/DDBJ databases">
        <authorList>
            <consortium name="NIH - Mammalian Gene Collection (MGC) project"/>
        </authorList>
    </citation>
    <scope>NUCLEOTIDE SEQUENCE [LARGE SCALE MRNA]</scope>
    <source>
        <strain>Hereford</strain>
        <tissue>Fetal lung</tissue>
    </source>
</reference>
<reference key="2">
    <citation type="submission" date="1997-10" db="EMBL/GenBank/DDBJ databases">
        <title>Bovine ATP binding protein.</title>
        <authorList>
            <person name="Brule S."/>
            <person name="Lussier J.G."/>
        </authorList>
    </citation>
    <scope>NUCLEOTIDE SEQUENCE [GENOMIC DNA] OF 71-226</scope>
    <source>
        <tissue>Corpus luteum</tissue>
    </source>
</reference>
<sequence>MEANASVDMFSKVLENQLLQTTKLVEEHLDSEIQKLDQMDEDELERLKEKRLEALKKAQQQKQEWLSKGHGEYREIPSERDFFQEDKESKKVVCHFYRDSTFRCKILDRHLVILSKKHLETKFLKLNVEKAPFLCERLRIKVIPTLALVKDGKTQDFVVGFSDLGNTDDFTTETLEWRLGCSDILNYSGNLMEPPFQSQKKFGTNFTKLEKKTIRGKKYDSDSDDD</sequence>
<comment type="function">
    <text evidence="1">Significantly diminishes the chaperonin TCP1 complex ATPase activity, thus negatively impacts protein folding, including that of actin or tubulin.</text>
</comment>
<comment type="subunit">
    <text evidence="1">Forms ternary complexes with the chaperonin TCP1 complex, spanning the cylindrical chaperonin cavity and contacting at least 2 subunits.</text>
</comment>
<comment type="subcellular location">
    <subcellularLocation>
        <location evidence="3">Cytoplasm</location>
    </subcellularLocation>
    <subcellularLocation>
        <location evidence="3">Nucleus</location>
    </subcellularLocation>
    <subcellularLocation>
        <location evidence="3">Cytoplasm</location>
        <location evidence="3">Cytoskeleton</location>
        <location evidence="3">Microtubule organizing center</location>
        <location evidence="3">Centrosome</location>
    </subcellularLocation>
    <subcellularLocation>
        <location evidence="3">Midbody</location>
    </subcellularLocation>
    <text evidence="3">Co-localizes with beta-tubulin in the centrosome.</text>
</comment>
<comment type="sequence caution" evidence="5">
    <conflict type="frameshift">
        <sequence resource="EMBL-CDS" id="AAB84006"/>
    </conflict>
</comment>
<organism>
    <name type="scientific">Bos taurus</name>
    <name type="common">Bovine</name>
    <dbReference type="NCBI Taxonomy" id="9913"/>
    <lineage>
        <taxon>Eukaryota</taxon>
        <taxon>Metazoa</taxon>
        <taxon>Chordata</taxon>
        <taxon>Craniata</taxon>
        <taxon>Vertebrata</taxon>
        <taxon>Euteleostomi</taxon>
        <taxon>Mammalia</taxon>
        <taxon>Eutheria</taxon>
        <taxon>Laurasiatheria</taxon>
        <taxon>Artiodactyla</taxon>
        <taxon>Ruminantia</taxon>
        <taxon>Pecora</taxon>
        <taxon>Bovidae</taxon>
        <taxon>Bovinae</taxon>
        <taxon>Bos</taxon>
    </lineage>
</organism>
<feature type="chain" id="PRO_0000120165" description="Thioredoxin domain-containing protein 9">
    <location>
        <begin position="1"/>
        <end position="226"/>
    </location>
</feature>
<feature type="domain" description="Thioredoxin" evidence="4">
    <location>
        <begin position="52"/>
        <end position="180"/>
    </location>
</feature>
<feature type="modified residue" description="Phosphoserine" evidence="2">
    <location>
        <position position="188"/>
    </location>
</feature>
<feature type="modified residue" description="Phosphoserine" evidence="2">
    <location>
        <position position="221"/>
    </location>
</feature>
<feature type="modified residue" description="Phosphoserine" evidence="2">
    <location>
        <position position="223"/>
    </location>
</feature>
<feature type="sequence conflict" description="In Ref. 2; AAI18431." evidence="5" ref="2">
    <original>D</original>
    <variation>V</variation>
    <location>
        <position position="86"/>
    </location>
</feature>